<reference evidence="10" key="1">
    <citation type="journal article" date="2000" name="J. Bacteriol.">
        <title>sigma(BldN), an extracytoplasmic function RNA polymerase sigma factor required for aerial mycelium formation in Streptomyces coelicolor A3(2).</title>
        <authorList>
            <person name="Bibb M.J."/>
            <person name="Molle V."/>
            <person name="Buttner M.J."/>
        </authorList>
    </citation>
    <scope>NUCLEOTIDE SEQUENCE [GENOMIC DNA]</scope>
    <scope>FUNCTION AS A SIGMA FACTOR</scope>
    <scope>INDUCTION</scope>
    <scope>DOMAIN</scope>
    <scope>DISRUPTION PHENOTYPE</scope>
    <scope>MUTAGENESIS OF GLY-103</scope>
    <source>
        <strain>ATCC BAA-471 / A3(2) / M145</strain>
    </source>
</reference>
<reference evidence="9" key="2">
    <citation type="journal article" date="2002" name="Nature">
        <title>Complete genome sequence of the model actinomycete Streptomyces coelicolor A3(2).</title>
        <authorList>
            <person name="Bentley S.D."/>
            <person name="Chater K.F."/>
            <person name="Cerdeno-Tarraga A.-M."/>
            <person name="Challis G.L."/>
            <person name="Thomson N.R."/>
            <person name="James K.D."/>
            <person name="Harris D.E."/>
            <person name="Quail M.A."/>
            <person name="Kieser H."/>
            <person name="Harper D."/>
            <person name="Bateman A."/>
            <person name="Brown S."/>
            <person name="Chandra G."/>
            <person name="Chen C.W."/>
            <person name="Collins M."/>
            <person name="Cronin A."/>
            <person name="Fraser A."/>
            <person name="Goble A."/>
            <person name="Hidalgo J."/>
            <person name="Hornsby T."/>
            <person name="Howarth S."/>
            <person name="Huang C.-H."/>
            <person name="Kieser T."/>
            <person name="Larke L."/>
            <person name="Murphy L.D."/>
            <person name="Oliver K."/>
            <person name="O'Neil S."/>
            <person name="Rabbinowitsch E."/>
            <person name="Rajandream M.A."/>
            <person name="Rutherford K.M."/>
            <person name="Rutter S."/>
            <person name="Seeger K."/>
            <person name="Saunders D."/>
            <person name="Sharp S."/>
            <person name="Squares R."/>
            <person name="Squares S."/>
            <person name="Taylor K."/>
            <person name="Warren T."/>
            <person name="Wietzorrek A."/>
            <person name="Woodward J.R."/>
            <person name="Barrell B.G."/>
            <person name="Parkhill J."/>
            <person name="Hopwood D.A."/>
        </authorList>
    </citation>
    <scope>NUCLEOTIDE SEQUENCE [LARGE SCALE GENOMIC DNA]</scope>
    <source>
        <strain>ATCC BAA-471 / A3(2) / M145</strain>
    </source>
</reference>
<reference key="3">
    <citation type="journal article" date="2001" name="Mol. Microbiol.">
        <title>BldD is a direct regulator of key developmental genes in Streptomyces coelicolor A3(2).</title>
        <authorList>
            <person name="Elliot M.A."/>
            <person name="Bibb M.J."/>
            <person name="Buttner M.J."/>
            <person name="Leskiw B.K."/>
        </authorList>
    </citation>
    <scope>INDUCTION</scope>
    <source>
        <strain>ATCC BAA-471 / A3(2) / M145</strain>
    </source>
</reference>
<reference key="4">
    <citation type="journal article" date="2003" name="J. Bacteriol.">
        <title>The Streptomyces coelicolor developmental transcription factor sigmaBldN is synthesized as a proprotein.</title>
        <authorList>
            <person name="Bibb M.J."/>
            <person name="Buttner M.J."/>
        </authorList>
    </citation>
    <scope>PROTEOLYTIC CLEAVAGE</scope>
    <scope>MUTAGENESIS OF MET-1; 87-MET-MET-88 AND ARG-264</scope>
    <source>
        <strain>ATCC BAA-471 / A3(2) / M145</strain>
    </source>
</reference>
<reference key="5">
    <citation type="journal article" date="2003" name="Genes Dev.">
        <title>The chaplins: a family of hydrophobic cell-surface proteins involved in aerial mycelium formation in Streptomyces coelicolor.</title>
        <authorList>
            <person name="Elliot M.A."/>
            <person name="Karoonuthaisiri N."/>
            <person name="Huang J."/>
            <person name="Bibb M.J."/>
            <person name="Cohen S.N."/>
            <person name="Kao C.M."/>
            <person name="Buttner M.J."/>
        </authorList>
    </citation>
    <scope>FUNCTION</scope>
    <scope>REGULON</scope>
    <scope>DISRUPTION PHENOTYPE</scope>
    <source>
        <strain>A3(2) / M600</strain>
    </source>
</reference>
<organism>
    <name type="scientific">Streptomyces coelicolor (strain ATCC BAA-471 / A3(2) / M145)</name>
    <dbReference type="NCBI Taxonomy" id="100226"/>
    <lineage>
        <taxon>Bacteria</taxon>
        <taxon>Bacillati</taxon>
        <taxon>Actinomycetota</taxon>
        <taxon>Actinomycetes</taxon>
        <taxon>Kitasatosporales</taxon>
        <taxon>Streptomycetaceae</taxon>
        <taxon>Streptomyces</taxon>
        <taxon>Streptomyces albidoflavus group</taxon>
    </lineage>
</organism>
<accession>Q9WX11</accession>
<accession>Q9RIT1</accession>
<feature type="propeptide" id="PRO_0000458993" evidence="5">
    <location>
        <begin position="1"/>
        <end status="unknown"/>
    </location>
</feature>
<feature type="chain" id="PRO_0000458994" description="ECF RNA polymerase sigma factor BldN">
    <location>
        <begin status="unknown"/>
        <end position="264"/>
    </location>
</feature>
<feature type="region of interest" description="Not required for transcription in vitro" evidence="3">
    <location>
        <begin position="1"/>
        <end position="87"/>
    </location>
</feature>
<feature type="region of interest" description="Disordered" evidence="2">
    <location>
        <begin position="64"/>
        <end position="83"/>
    </location>
</feature>
<feature type="region of interest" description="Sigma-70 factor domain-2" evidence="8">
    <location>
        <begin position="105"/>
        <end position="172"/>
    </location>
</feature>
<feature type="region of interest" description="Sigma-70 factor domain-4" evidence="8">
    <location>
        <begin position="204"/>
        <end position="255"/>
    </location>
</feature>
<feature type="short sequence motif" description="Polymerase core binding" evidence="1">
    <location>
        <begin position="129"/>
        <end position="132"/>
    </location>
</feature>
<feature type="mutagenesis site" description="Complete loss of protein expression." evidence="5">
    <original>M</original>
    <variation>V</variation>
    <location>
        <position position="1"/>
    </location>
</feature>
<feature type="mutagenesis site" description="Makes 28 kDa form of protein, complements deletion." evidence="5">
    <original>MM</original>
    <variation>AA</variation>
    <location>
        <begin position="87"/>
        <end position="88"/>
    </location>
</feature>
<feature type="mutagenesis site" description="In R650; colonies are medium gray, and frequently produce longer spores. Some precursor form persists during aerial mycelium and spore formation." evidence="3 5">
    <original>G</original>
    <variation>D</variation>
    <location>
        <position position="103"/>
    </location>
</feature>
<feature type="mutagenesis site" description="Reduced aerial mycelium formation." evidence="5">
    <original>R</original>
    <variation>RHHHHHHH</variation>
    <location>
        <position position="264"/>
    </location>
</feature>
<keyword id="KW-1185">Reference proteome</keyword>
<keyword id="KW-0731">Sigma factor</keyword>
<keyword id="KW-0749">Sporulation</keyword>
<keyword id="KW-0804">Transcription</keyword>
<keyword id="KW-0805">Transcription regulation</keyword>
<dbReference type="EMBL" id="AJ010584">
    <property type="protein sequence ID" value="CAB55345.1"/>
    <property type="molecule type" value="Genomic_DNA"/>
</dbReference>
<dbReference type="EMBL" id="AL939116">
    <property type="protein sequence ID" value="CAB45357.1"/>
    <property type="status" value="ALT_INIT"/>
    <property type="molecule type" value="Genomic_DNA"/>
</dbReference>
<dbReference type="PIR" id="T36271">
    <property type="entry name" value="T36271"/>
</dbReference>
<dbReference type="RefSeq" id="NP_627533.1">
    <property type="nucleotide sequence ID" value="NC_003888.3"/>
</dbReference>
<dbReference type="RefSeq" id="WP_003975513.1">
    <property type="nucleotide sequence ID" value="NZ_VNID01000025.1"/>
</dbReference>
<dbReference type="SMR" id="Q9WX11"/>
<dbReference type="STRING" id="100226.gene:17760942"/>
<dbReference type="PaxDb" id="100226-SCO3323"/>
<dbReference type="KEGG" id="sco:SCO3323"/>
<dbReference type="PATRIC" id="fig|100226.15.peg.3383"/>
<dbReference type="eggNOG" id="COG1595">
    <property type="taxonomic scope" value="Bacteria"/>
</dbReference>
<dbReference type="HOGENOM" id="CLU_047691_3_4_11"/>
<dbReference type="InParanoid" id="Q9WX11"/>
<dbReference type="OrthoDB" id="261230at2"/>
<dbReference type="PhylomeDB" id="Q9WX11"/>
<dbReference type="Proteomes" id="UP000001973">
    <property type="component" value="Chromosome"/>
</dbReference>
<dbReference type="GO" id="GO:0003677">
    <property type="term" value="F:DNA binding"/>
    <property type="evidence" value="ECO:0007669"/>
    <property type="project" value="InterPro"/>
</dbReference>
<dbReference type="GO" id="GO:0016987">
    <property type="term" value="F:sigma factor activity"/>
    <property type="evidence" value="ECO:0000318"/>
    <property type="project" value="GO_Central"/>
</dbReference>
<dbReference type="GO" id="GO:0006352">
    <property type="term" value="P:DNA-templated transcription initiation"/>
    <property type="evidence" value="ECO:0007669"/>
    <property type="project" value="InterPro"/>
</dbReference>
<dbReference type="GO" id="GO:0006355">
    <property type="term" value="P:regulation of DNA-templated transcription"/>
    <property type="evidence" value="ECO:0000318"/>
    <property type="project" value="GO_Central"/>
</dbReference>
<dbReference type="GO" id="GO:0030435">
    <property type="term" value="P:sporulation resulting in formation of a cellular spore"/>
    <property type="evidence" value="ECO:0007669"/>
    <property type="project" value="UniProtKB-KW"/>
</dbReference>
<dbReference type="CDD" id="cd06171">
    <property type="entry name" value="Sigma70_r4"/>
    <property type="match status" value="1"/>
</dbReference>
<dbReference type="Gene3D" id="1.10.1740.10">
    <property type="match status" value="1"/>
</dbReference>
<dbReference type="Gene3D" id="1.10.10.10">
    <property type="entry name" value="Winged helix-like DNA-binding domain superfamily/Winged helix DNA-binding domain"/>
    <property type="match status" value="1"/>
</dbReference>
<dbReference type="InterPro" id="IPR014298">
    <property type="entry name" value="BldN-like"/>
</dbReference>
<dbReference type="InterPro" id="IPR039425">
    <property type="entry name" value="RNA_pol_sigma-70-like"/>
</dbReference>
<dbReference type="InterPro" id="IPR014284">
    <property type="entry name" value="RNA_pol_sigma-70_dom"/>
</dbReference>
<dbReference type="InterPro" id="IPR007627">
    <property type="entry name" value="RNA_pol_sigma70_r2"/>
</dbReference>
<dbReference type="InterPro" id="IPR013249">
    <property type="entry name" value="RNA_pol_sigma70_r4_t2"/>
</dbReference>
<dbReference type="InterPro" id="IPR013325">
    <property type="entry name" value="RNA_pol_sigma_r2"/>
</dbReference>
<dbReference type="InterPro" id="IPR013324">
    <property type="entry name" value="RNA_pol_sigma_r3/r4-like"/>
</dbReference>
<dbReference type="InterPro" id="IPR036388">
    <property type="entry name" value="WH-like_DNA-bd_sf"/>
</dbReference>
<dbReference type="NCBIfam" id="TIGR02952">
    <property type="entry name" value="Sig70_famx2"/>
    <property type="match status" value="1"/>
</dbReference>
<dbReference type="NCBIfam" id="TIGR02937">
    <property type="entry name" value="sigma70-ECF"/>
    <property type="match status" value="1"/>
</dbReference>
<dbReference type="PANTHER" id="PTHR43133">
    <property type="entry name" value="RNA POLYMERASE ECF-TYPE SIGMA FACTO"/>
    <property type="match status" value="1"/>
</dbReference>
<dbReference type="PANTHER" id="PTHR43133:SF57">
    <property type="entry name" value="RNA POLYMERASE SIGMA-70 FACTOR"/>
    <property type="match status" value="1"/>
</dbReference>
<dbReference type="Pfam" id="PF04542">
    <property type="entry name" value="Sigma70_r2"/>
    <property type="match status" value="1"/>
</dbReference>
<dbReference type="Pfam" id="PF08281">
    <property type="entry name" value="Sigma70_r4_2"/>
    <property type="match status" value="1"/>
</dbReference>
<dbReference type="SUPFAM" id="SSF88946">
    <property type="entry name" value="Sigma2 domain of RNA polymerase sigma factors"/>
    <property type="match status" value="1"/>
</dbReference>
<dbReference type="SUPFAM" id="SSF88659">
    <property type="entry name" value="Sigma3 and sigma4 domains of RNA polymerase sigma factors"/>
    <property type="match status" value="1"/>
</dbReference>
<protein>
    <recommendedName>
        <fullName evidence="7">ECF RNA polymerase sigma factor BldN</fullName>
        <shortName evidence="7">Sigma BldN</shortName>
    </recommendedName>
    <alternativeName>
        <fullName evidence="8">Alternative RNA polymerase sigma factor BldN</fullName>
    </alternativeName>
</protein>
<gene>
    <name evidence="7" type="primary">bldN</name>
    <name evidence="7" type="synonym">whiN</name>
    <name evidence="9" type="ordered locus">SCO3323</name>
    <name evidence="9" type="ORF">SCE68.21</name>
</gene>
<name>BLDN_STRCO</name>
<comment type="function">
    <text evidence="3 5 6 8">Sigma factors are initiation factors that promote the attachment of RNA polymerase to specific initiation sites and are then released. Extracytoplasmic function (ECF) sigma factors are usually held in an inactive form by an anti-sigma factor until released (Probable). ECF sigma factor involved in aerial mycelium formation, required for translation from the bldMp1 promoter (PubMed:10913095). Expressed as a preprotein; processing and accumulation of the mature protein starts as aerial mycelium formation and sporulation commence (PubMed:12644505). Activates expression of about 17 genes, including those for rdlA and most of the chaplins (chpA to chpH); chaplin activation is indirect (PubMed:12832397).</text>
</comment>
<comment type="induction">
    <text evidence="3 4 5">Poorly transcribed during vegetative growth, highly transcribed during aerial mycelium formation, mRNA remains high during sporulation (PubMed:10913095, PubMed:12644505). Transcription depends (directly or indirectly) on bldG and bldH, in their absence bldN is not transcribed (PubMed:10913095). Premature expression of this gene is directly repressed by BldD (PubMed:11298292).</text>
</comment>
<comment type="PTM">
    <text evidence="5">Two forms of protein exist; a 35 kDa form in early growth and a 28 kDa form seen in later stages (at protein level). In liquid culture the larger form accumulates to higher level than on solid media. The shorter form results from processing just upstream of Met-87; the exact position is unknown. There are 4 possible start codons; mutation of the first prevents protein production while mutation of the other 3 (Val-44, Met-87 and Met-88) permits production of both forms. Introduction of stop codons between the first and second, or second and third possible start codons also prevents protein production, corroborating that the annotated start codon is the correct one (PubMed:12644505).</text>
</comment>
<comment type="disruption phenotype">
    <text evidence="3 6">Arrests development; a bald phenotype, does not erect aerial hyphae on minimal or rich medium (MS or R2YE), still makes actinorhodin and undecylprodigiosin. No transcription from the bldMp1 promoter (also called whiK) (PubMed:10913095). Significant down-regulation of 17 genes (PubMed:12832397).</text>
</comment>
<comment type="miscellaneous">
    <text evidence="3">A mutation in the promoter region (called R112) carries a GGAG to GGAA change in the putative ribosome binding site that reduces complementarity to the 3' end of the 16S rRNA; this is presumably very poorly translated. R112 colonies are white and produce long, straight, undifferentiated hyphae, with rare spore chains observed, sometimes showing highly irregular septum placement. Additional pleiotropic effects are seen such as substantially reduced aerial mycelium. The R650 mutation (Gly-103 to Asp) probably interacts less efficiently with core RNA polymerase.</text>
</comment>
<comment type="similarity">
    <text evidence="8">Belongs to the sigma-70 factor family. ECF subfamily.</text>
</comment>
<comment type="sequence caution" evidence="8">
    <conflict type="erroneous initiation">
        <sequence resource="EMBL-CDS" id="CAB45357"/>
    </conflict>
    <text>Truncated N-terminus.</text>
</comment>
<evidence type="ECO:0000255" key="1"/>
<evidence type="ECO:0000256" key="2">
    <source>
        <dbReference type="SAM" id="MobiDB-lite"/>
    </source>
</evidence>
<evidence type="ECO:0000269" key="3">
    <source>
    </source>
</evidence>
<evidence type="ECO:0000269" key="4">
    <source>
    </source>
</evidence>
<evidence type="ECO:0000269" key="5">
    <source>
    </source>
</evidence>
<evidence type="ECO:0000269" key="6">
    <source>
    </source>
</evidence>
<evidence type="ECO:0000303" key="7">
    <source>
    </source>
</evidence>
<evidence type="ECO:0000305" key="8"/>
<evidence type="ECO:0000312" key="9">
    <source>
        <dbReference type="EMBL" id="CAB45357.1"/>
    </source>
</evidence>
<evidence type="ECO:0000312" key="10">
    <source>
        <dbReference type="EMBL" id="CAB55345.1"/>
    </source>
</evidence>
<proteinExistence type="evidence at protein level"/>
<sequence length="264" mass="28714">MYPHVGVDASGLATLRATVKSAQDLLRGFVPTAYAVPALAAAAVPAGPCYALAEGSAVVGRRARSSSSGAAATTHRRPAADSDSARMMELVERAQAGEADAFGRLYDQYSDTVYRYIYYRVGGKATAEDLTSETFLRALRRIGTFTYQGRDFGAWLVTIARNLVADHFKSSRFRLEVTTGEMLDANEVERSPEDSVLESLSNAALLDAVRRLNPQQQECVTLRFLQGLSVAETARVMGKNEGAIKTLQYRAVRTLARLLPDDAR</sequence>